<accession>A8ILK1</accession>
<organism>
    <name type="scientific">Chlamydomonas reinhardtii</name>
    <name type="common">Chlamydomonas smithii</name>
    <dbReference type="NCBI Taxonomy" id="3055"/>
    <lineage>
        <taxon>Eukaryota</taxon>
        <taxon>Viridiplantae</taxon>
        <taxon>Chlorophyta</taxon>
        <taxon>core chlorophytes</taxon>
        <taxon>Chlorophyceae</taxon>
        <taxon>CS clade</taxon>
        <taxon>Chlamydomonadales</taxon>
        <taxon>Chlamydomonadaceae</taxon>
        <taxon>Chlamydomonas</taxon>
    </lineage>
</organism>
<protein>
    <recommendedName>
        <fullName evidence="4">Cilia- and flagella-associated protein 52</fullName>
    </recommendedName>
</protein>
<name>CFA52_CHLRE</name>
<feature type="chain" id="PRO_0000431302" description="Cilia- and flagella-associated protein 52">
    <location>
        <begin position="1"/>
        <end position="615"/>
    </location>
</feature>
<feature type="repeat" description="WD 1" evidence="2">
    <location>
        <begin position="54"/>
        <end position="98"/>
    </location>
</feature>
<feature type="repeat" description="WD 2" evidence="2">
    <location>
        <begin position="101"/>
        <end position="142"/>
    </location>
</feature>
<feature type="repeat" description="WD 3" evidence="2">
    <location>
        <begin position="145"/>
        <end position="184"/>
    </location>
</feature>
<feature type="repeat" description="WD 4" evidence="2">
    <location>
        <begin position="232"/>
        <end position="275"/>
    </location>
</feature>
<feature type="repeat" description="WD 5" evidence="2">
    <location>
        <begin position="320"/>
        <end position="359"/>
    </location>
</feature>
<feature type="repeat" description="WD 6" evidence="2">
    <location>
        <begin position="362"/>
        <end position="401"/>
    </location>
</feature>
<feature type="repeat" description="WD 7" evidence="2">
    <location>
        <begin position="405"/>
        <end position="444"/>
    </location>
</feature>
<feature type="repeat" description="WD 8" evidence="2">
    <location>
        <begin position="449"/>
        <end position="488"/>
    </location>
</feature>
<feature type="repeat" description="WD 9" evidence="2">
    <location>
        <begin position="490"/>
        <end position="529"/>
    </location>
</feature>
<feature type="repeat" description="WD 10" evidence="2">
    <location>
        <begin position="533"/>
        <end position="572"/>
    </location>
</feature>
<feature type="repeat" description="WD 11" evidence="2">
    <location>
        <begin position="575"/>
        <end position="614"/>
    </location>
</feature>
<dbReference type="EMBL" id="DS496118">
    <property type="protein sequence ID" value="EDP05376.1"/>
    <property type="molecule type" value="Genomic_DNA"/>
</dbReference>
<dbReference type="RefSeq" id="XP_001690930.1">
    <property type="nucleotide sequence ID" value="XM_001690878.1"/>
</dbReference>
<dbReference type="SMR" id="A8ILK1"/>
<dbReference type="PaxDb" id="3055-EDP05376"/>
<dbReference type="eggNOG" id="KOG0266">
    <property type="taxonomic scope" value="Eukaryota"/>
</dbReference>
<dbReference type="HOGENOM" id="CLU_009244_2_0_1"/>
<dbReference type="GO" id="GO:0005930">
    <property type="term" value="C:axoneme"/>
    <property type="evidence" value="ECO:0000314"/>
    <property type="project" value="GeneDB"/>
</dbReference>
<dbReference type="GO" id="GO:0036064">
    <property type="term" value="C:ciliary basal body"/>
    <property type="evidence" value="ECO:0000314"/>
    <property type="project" value="GeneDB"/>
</dbReference>
<dbReference type="GO" id="GO:0031514">
    <property type="term" value="C:motile cilium"/>
    <property type="evidence" value="ECO:0007669"/>
    <property type="project" value="UniProtKB-SubCell"/>
</dbReference>
<dbReference type="CDD" id="cd00200">
    <property type="entry name" value="WD40"/>
    <property type="match status" value="1"/>
</dbReference>
<dbReference type="FunFam" id="2.130.10.10:FF:000173">
    <property type="entry name" value="Cilia- and flagella-associated protein 52"/>
    <property type="match status" value="1"/>
</dbReference>
<dbReference type="FunFam" id="2.130.10.10:FF:000207">
    <property type="entry name" value="Cilia- and flagella-associated protein 52"/>
    <property type="match status" value="1"/>
</dbReference>
<dbReference type="FunFam" id="2.130.10.10:FF:001320">
    <property type="entry name" value="Predicted protein"/>
    <property type="match status" value="1"/>
</dbReference>
<dbReference type="Gene3D" id="2.130.10.10">
    <property type="entry name" value="YVTN repeat-like/Quinoprotein amine dehydrogenase"/>
    <property type="match status" value="3"/>
</dbReference>
<dbReference type="InterPro" id="IPR015943">
    <property type="entry name" value="WD40/YVTN_repeat-like_dom_sf"/>
</dbReference>
<dbReference type="InterPro" id="IPR019775">
    <property type="entry name" value="WD40_repeat_CS"/>
</dbReference>
<dbReference type="InterPro" id="IPR036322">
    <property type="entry name" value="WD40_repeat_dom_sf"/>
</dbReference>
<dbReference type="InterPro" id="IPR001680">
    <property type="entry name" value="WD40_rpt"/>
</dbReference>
<dbReference type="InterPro" id="IPR050630">
    <property type="entry name" value="WD_repeat_EMAP"/>
</dbReference>
<dbReference type="InterPro" id="IPR055440">
    <property type="entry name" value="WDR90_beta-prop_4th"/>
</dbReference>
<dbReference type="PANTHER" id="PTHR13720:SF14">
    <property type="entry name" value="CILIA- AND FLAGELLA-ASSOCIATED PROTEIN 52"/>
    <property type="match status" value="1"/>
</dbReference>
<dbReference type="PANTHER" id="PTHR13720">
    <property type="entry name" value="WD-40 REPEAT PROTEIN"/>
    <property type="match status" value="1"/>
</dbReference>
<dbReference type="Pfam" id="PF00400">
    <property type="entry name" value="WD40"/>
    <property type="match status" value="4"/>
</dbReference>
<dbReference type="Pfam" id="PF23342">
    <property type="entry name" value="WDR90_beta-prop_4th"/>
    <property type="match status" value="1"/>
</dbReference>
<dbReference type="SMART" id="SM00320">
    <property type="entry name" value="WD40"/>
    <property type="match status" value="10"/>
</dbReference>
<dbReference type="SUPFAM" id="SSF50978">
    <property type="entry name" value="WD40 repeat-like"/>
    <property type="match status" value="2"/>
</dbReference>
<dbReference type="PROSITE" id="PS00678">
    <property type="entry name" value="WD_REPEATS_1"/>
    <property type="match status" value="2"/>
</dbReference>
<dbReference type="PROSITE" id="PS50082">
    <property type="entry name" value="WD_REPEATS_2"/>
    <property type="match status" value="5"/>
</dbReference>
<dbReference type="PROSITE" id="PS50294">
    <property type="entry name" value="WD_REPEATS_REGION"/>
    <property type="match status" value="2"/>
</dbReference>
<sequence>MAEPLVLNSVIGFGGAIENGLIAHPDGRTIIYPLGSTIVLRDRADPRSQEFLQGHSDKVSCLALSRSGRYLASGQITYMGFTADIIIWDLESKQLIHRMALHKVKVQALDFSCDERFLASLGGQDDNALVLWDVASGNAICGSPCNTNFTNCVKFFNNSPDKLITAGNFNMNVWTYDAGNNKLRPTDATLGTLKRVFKSVVVDANDEYAYCGTTTGDVLQIALERVLFKNTGPAKGNVQMGVTATCEVPTGDILVGGGDGSLQLLRKMPALAGTKVEGAITSIALADMNARGFTFFVGTAMCNIYKPATSRLKEELVQTAHNDKINGMAFPNEYSEVFATCGTGFIRLWHLTTCRELLRIAVPNLECFCIAFTTDGSAILSGWSDGKIRAFGPQSGKIIFTINDAHQKAVTAIASTADSSRILSGGEEGMVRVWRIGRTSQTLEASMKDHKGPVNCIRIKGSGDECVSASSDGSCILWDLHTFKRRTSLFANTFFKSVVYHPDESQLVTAGTDRKVTYWDAYDGNAIRIIDGSDLDEVNALAVDRDGEALVSGGGDKLVKLWGYDEGHCYFVGVAHSGAITAVGVTPDKQRIVSVGTEGGIFIWDYQRPQTLADI</sequence>
<proteinExistence type="evidence at protein level"/>
<comment type="function">
    <text evidence="1">May play a role in cell growth and/or survival.</text>
</comment>
<comment type="subcellular location">
    <subcellularLocation>
        <location evidence="1">Cytoplasm</location>
    </subcellularLocation>
    <subcellularLocation>
        <location evidence="3">Cell projection</location>
        <location evidence="3">Cilium</location>
        <location evidence="3">Flagellum</location>
    </subcellularLocation>
</comment>
<comment type="similarity">
    <text evidence="4">Belongs to the CFAP52 family.</text>
</comment>
<gene>
    <name evidence="4" type="primary">CFAP52</name>
    <name evidence="5" type="synonym">FAP52</name>
    <name evidence="5" type="ORF">CHLREDRAFT_128114</name>
</gene>
<keyword id="KW-0966">Cell projection</keyword>
<keyword id="KW-0969">Cilium</keyword>
<keyword id="KW-0963">Cytoplasm</keyword>
<keyword id="KW-0282">Flagellum</keyword>
<keyword id="KW-0677">Repeat</keyword>
<keyword id="KW-0853">WD repeat</keyword>
<evidence type="ECO:0000250" key="1">
    <source>
        <dbReference type="UniProtKB" id="Q8N1V2"/>
    </source>
</evidence>
<evidence type="ECO:0000255" key="2"/>
<evidence type="ECO:0000269" key="3">
    <source>
    </source>
</evidence>
<evidence type="ECO:0000305" key="4"/>
<evidence type="ECO:0000312" key="5">
    <source>
        <dbReference type="EMBL" id="EDP05376.1"/>
    </source>
</evidence>
<reference key="1">
    <citation type="journal article" date="2007" name="Science">
        <title>The Chlamydomonas genome reveals the evolution of key animal and plant functions.</title>
        <authorList>
            <person name="Merchant S.S."/>
            <person name="Prochnik S.E."/>
            <person name="Vallon O."/>
            <person name="Harris E.H."/>
            <person name="Karpowicz S.J."/>
            <person name="Witman G.B."/>
            <person name="Terry A."/>
            <person name="Salamov A."/>
            <person name="Fritz-Laylin L.K."/>
            <person name="Marechal-Drouard L."/>
            <person name="Marshall W.F."/>
            <person name="Qu L.H."/>
            <person name="Nelson D.R."/>
            <person name="Sanderfoot A.A."/>
            <person name="Spalding M.H."/>
            <person name="Kapitonov V.V."/>
            <person name="Ren Q."/>
            <person name="Ferris P."/>
            <person name="Lindquist E."/>
            <person name="Shapiro H."/>
            <person name="Lucas S.M."/>
            <person name="Grimwood J."/>
            <person name="Schmutz J."/>
            <person name="Cardol P."/>
            <person name="Cerutti H."/>
            <person name="Chanfreau G."/>
            <person name="Chen C.L."/>
            <person name="Cognat V."/>
            <person name="Croft M.T."/>
            <person name="Dent R."/>
            <person name="Dutcher S."/>
            <person name="Fernandez E."/>
            <person name="Fukuzawa H."/>
            <person name="Gonzalez-Ballester D."/>
            <person name="Gonzalez-Halphen D."/>
            <person name="Hallmann A."/>
            <person name="Hanikenne M."/>
            <person name="Hippler M."/>
            <person name="Inwood W."/>
            <person name="Jabbari K."/>
            <person name="Kalanon M."/>
            <person name="Kuras R."/>
            <person name="Lefebvre P.A."/>
            <person name="Lemaire S.D."/>
            <person name="Lobanov A.V."/>
            <person name="Lohr M."/>
            <person name="Manuell A."/>
            <person name="Meier I."/>
            <person name="Mets L."/>
            <person name="Mittag M."/>
            <person name="Mittelmeier T."/>
            <person name="Moroney J.V."/>
            <person name="Moseley J."/>
            <person name="Napoli C."/>
            <person name="Nedelcu A.M."/>
            <person name="Niyogi K."/>
            <person name="Novoselov S.V."/>
            <person name="Paulsen I.T."/>
            <person name="Pazour G.J."/>
            <person name="Purton S."/>
            <person name="Ral J.P."/>
            <person name="Riano-Pachon D.M."/>
            <person name="Riekhof W."/>
            <person name="Rymarquis L."/>
            <person name="Schroda M."/>
            <person name="Stern D."/>
            <person name="Umen J."/>
            <person name="Willows R."/>
            <person name="Wilson N."/>
            <person name="Zimmer S.L."/>
            <person name="Allmer J."/>
            <person name="Balk J."/>
            <person name="Bisova K."/>
            <person name="Chen C.J."/>
            <person name="Elias M."/>
            <person name="Gendler K."/>
            <person name="Hauser C."/>
            <person name="Lamb M.R."/>
            <person name="Ledford H."/>
            <person name="Long J.C."/>
            <person name="Minagawa J."/>
            <person name="Page M.D."/>
            <person name="Pan J."/>
            <person name="Pootakham W."/>
            <person name="Roje S."/>
            <person name="Rose A."/>
            <person name="Stahlberg E."/>
            <person name="Terauchi A.M."/>
            <person name="Yang P."/>
            <person name="Ball S."/>
            <person name="Bowler C."/>
            <person name="Dieckmann C.L."/>
            <person name="Gladyshev V.N."/>
            <person name="Green P."/>
            <person name="Jorgensen R."/>
            <person name="Mayfield S."/>
            <person name="Mueller-Roeber B."/>
            <person name="Rajamani S."/>
            <person name="Sayre R.T."/>
            <person name="Brokstein P."/>
            <person name="Dubchak I."/>
            <person name="Goodstein D."/>
            <person name="Hornick L."/>
            <person name="Huang Y.W."/>
            <person name="Jhaveri J."/>
            <person name="Luo Y."/>
            <person name="Martinez D."/>
            <person name="Ngau W.C."/>
            <person name="Otillar B."/>
            <person name="Poliakov A."/>
            <person name="Porter A."/>
            <person name="Szajkowski L."/>
            <person name="Werner G."/>
            <person name="Zhou K."/>
            <person name="Grigoriev I.V."/>
            <person name="Rokhsar D.S."/>
            <person name="Grossman A.R."/>
        </authorList>
    </citation>
    <scope>NUCLEOTIDE SEQUENCE [LARGE SCALE GENOMIC DNA]</scope>
    <source>
        <strain>CC-503</strain>
    </source>
</reference>
<reference key="2">
    <citation type="journal article" date="2005" name="J. Cell Biol.">
        <title>Proteomic analysis of a eukaryotic cilium.</title>
        <authorList>
            <person name="Pazour G.J."/>
            <person name="Agrin N."/>
            <person name="Leszyk J."/>
            <person name="Witman G.B."/>
        </authorList>
    </citation>
    <scope>IDENTIFICATION BY MASS SPECTROMETRY</scope>
    <scope>SUBCELLULAR LOCATION</scope>
</reference>